<dbReference type="EC" id="4.2.1.11" evidence="2"/>
<dbReference type="EMBL" id="CP000243">
    <property type="protein sequence ID" value="ABE08600.1"/>
    <property type="molecule type" value="Genomic_DNA"/>
</dbReference>
<dbReference type="RefSeq" id="WP_000036723.1">
    <property type="nucleotide sequence ID" value="NZ_CP064825.1"/>
</dbReference>
<dbReference type="SMR" id="Q1R7R4"/>
<dbReference type="GeneID" id="93779219"/>
<dbReference type="KEGG" id="eci:UTI89_C3148"/>
<dbReference type="HOGENOM" id="CLU_031223_2_1_6"/>
<dbReference type="UniPathway" id="UPA00109">
    <property type="reaction ID" value="UER00187"/>
</dbReference>
<dbReference type="Proteomes" id="UP000001952">
    <property type="component" value="Chromosome"/>
</dbReference>
<dbReference type="GO" id="GO:0009986">
    <property type="term" value="C:cell surface"/>
    <property type="evidence" value="ECO:0007669"/>
    <property type="project" value="UniProtKB-SubCell"/>
</dbReference>
<dbReference type="GO" id="GO:0005576">
    <property type="term" value="C:extracellular region"/>
    <property type="evidence" value="ECO:0007669"/>
    <property type="project" value="UniProtKB-SubCell"/>
</dbReference>
<dbReference type="GO" id="GO:0000015">
    <property type="term" value="C:phosphopyruvate hydratase complex"/>
    <property type="evidence" value="ECO:0007669"/>
    <property type="project" value="InterPro"/>
</dbReference>
<dbReference type="GO" id="GO:0000287">
    <property type="term" value="F:magnesium ion binding"/>
    <property type="evidence" value="ECO:0007669"/>
    <property type="project" value="UniProtKB-UniRule"/>
</dbReference>
<dbReference type="GO" id="GO:0004634">
    <property type="term" value="F:phosphopyruvate hydratase activity"/>
    <property type="evidence" value="ECO:0007669"/>
    <property type="project" value="UniProtKB-UniRule"/>
</dbReference>
<dbReference type="GO" id="GO:0006096">
    <property type="term" value="P:glycolytic process"/>
    <property type="evidence" value="ECO:0007669"/>
    <property type="project" value="UniProtKB-UniRule"/>
</dbReference>
<dbReference type="CDD" id="cd03313">
    <property type="entry name" value="enolase"/>
    <property type="match status" value="1"/>
</dbReference>
<dbReference type="FunFam" id="3.20.20.120:FF:000001">
    <property type="entry name" value="Enolase"/>
    <property type="match status" value="1"/>
</dbReference>
<dbReference type="FunFam" id="3.30.390.10:FF:000001">
    <property type="entry name" value="Enolase"/>
    <property type="match status" value="1"/>
</dbReference>
<dbReference type="Gene3D" id="3.20.20.120">
    <property type="entry name" value="Enolase-like C-terminal domain"/>
    <property type="match status" value="1"/>
</dbReference>
<dbReference type="Gene3D" id="3.30.390.10">
    <property type="entry name" value="Enolase-like, N-terminal domain"/>
    <property type="match status" value="1"/>
</dbReference>
<dbReference type="HAMAP" id="MF_00318">
    <property type="entry name" value="Enolase"/>
    <property type="match status" value="1"/>
</dbReference>
<dbReference type="InterPro" id="IPR000941">
    <property type="entry name" value="Enolase"/>
</dbReference>
<dbReference type="InterPro" id="IPR036849">
    <property type="entry name" value="Enolase-like_C_sf"/>
</dbReference>
<dbReference type="InterPro" id="IPR029017">
    <property type="entry name" value="Enolase-like_N"/>
</dbReference>
<dbReference type="InterPro" id="IPR020810">
    <property type="entry name" value="Enolase_C"/>
</dbReference>
<dbReference type="InterPro" id="IPR020809">
    <property type="entry name" value="Enolase_CS"/>
</dbReference>
<dbReference type="InterPro" id="IPR020811">
    <property type="entry name" value="Enolase_N"/>
</dbReference>
<dbReference type="NCBIfam" id="TIGR01060">
    <property type="entry name" value="eno"/>
    <property type="match status" value="1"/>
</dbReference>
<dbReference type="PANTHER" id="PTHR11902">
    <property type="entry name" value="ENOLASE"/>
    <property type="match status" value="1"/>
</dbReference>
<dbReference type="PANTHER" id="PTHR11902:SF1">
    <property type="entry name" value="ENOLASE"/>
    <property type="match status" value="1"/>
</dbReference>
<dbReference type="Pfam" id="PF00113">
    <property type="entry name" value="Enolase_C"/>
    <property type="match status" value="1"/>
</dbReference>
<dbReference type="Pfam" id="PF03952">
    <property type="entry name" value="Enolase_N"/>
    <property type="match status" value="1"/>
</dbReference>
<dbReference type="PIRSF" id="PIRSF001400">
    <property type="entry name" value="Enolase"/>
    <property type="match status" value="1"/>
</dbReference>
<dbReference type="PRINTS" id="PR00148">
    <property type="entry name" value="ENOLASE"/>
</dbReference>
<dbReference type="SFLD" id="SFLDS00001">
    <property type="entry name" value="Enolase"/>
    <property type="match status" value="1"/>
</dbReference>
<dbReference type="SFLD" id="SFLDF00002">
    <property type="entry name" value="enolase"/>
    <property type="match status" value="1"/>
</dbReference>
<dbReference type="SMART" id="SM01192">
    <property type="entry name" value="Enolase_C"/>
    <property type="match status" value="1"/>
</dbReference>
<dbReference type="SMART" id="SM01193">
    <property type="entry name" value="Enolase_N"/>
    <property type="match status" value="1"/>
</dbReference>
<dbReference type="SUPFAM" id="SSF51604">
    <property type="entry name" value="Enolase C-terminal domain-like"/>
    <property type="match status" value="1"/>
</dbReference>
<dbReference type="SUPFAM" id="SSF54826">
    <property type="entry name" value="Enolase N-terminal domain-like"/>
    <property type="match status" value="1"/>
</dbReference>
<dbReference type="PROSITE" id="PS00164">
    <property type="entry name" value="ENOLASE"/>
    <property type="match status" value="1"/>
</dbReference>
<organism>
    <name type="scientific">Escherichia coli (strain UTI89 / UPEC)</name>
    <dbReference type="NCBI Taxonomy" id="364106"/>
    <lineage>
        <taxon>Bacteria</taxon>
        <taxon>Pseudomonadati</taxon>
        <taxon>Pseudomonadota</taxon>
        <taxon>Gammaproteobacteria</taxon>
        <taxon>Enterobacterales</taxon>
        <taxon>Enterobacteriaceae</taxon>
        <taxon>Escherichia</taxon>
    </lineage>
</organism>
<comment type="function">
    <text evidence="2">Catalyzes the reversible conversion of 2-phosphoglycerate (2-PG) into phosphoenolpyruvate (PEP). It is essential for the degradation of carbohydrates via glycolysis.</text>
</comment>
<comment type="catalytic activity">
    <reaction evidence="2">
        <text>(2R)-2-phosphoglycerate = phosphoenolpyruvate + H2O</text>
        <dbReference type="Rhea" id="RHEA:10164"/>
        <dbReference type="ChEBI" id="CHEBI:15377"/>
        <dbReference type="ChEBI" id="CHEBI:58289"/>
        <dbReference type="ChEBI" id="CHEBI:58702"/>
        <dbReference type="EC" id="4.2.1.11"/>
    </reaction>
</comment>
<comment type="cofactor">
    <cofactor evidence="2">
        <name>Mg(2+)</name>
        <dbReference type="ChEBI" id="CHEBI:18420"/>
    </cofactor>
    <text evidence="2">Binds a second Mg(2+) ion via substrate during catalysis.</text>
</comment>
<comment type="pathway">
    <text evidence="2">Carbohydrate degradation; glycolysis; pyruvate from D-glyceraldehyde 3-phosphate: step 4/5.</text>
</comment>
<comment type="subunit">
    <text evidence="2">Component of the RNA degradosome, a multiprotein complex involved in RNA processing and mRNA degradation.</text>
</comment>
<comment type="subcellular location">
    <subcellularLocation>
        <location evidence="2">Cytoplasm</location>
    </subcellularLocation>
    <subcellularLocation>
        <location evidence="2">Secreted</location>
    </subcellularLocation>
    <subcellularLocation>
        <location evidence="2">Cell surface</location>
    </subcellularLocation>
    <text evidence="2">Fractions of enolase are present in both the cytoplasm and on the cell surface.</text>
</comment>
<comment type="similarity">
    <text evidence="2">Belongs to the enolase family.</text>
</comment>
<sequence length="432" mass="45655">MSKIVKIIGREIIDSRGNPTVEAEVHLEGGFVGMAAAPSGASTGSREALELRDGDKSRFLGKGVTKAVAAVNGPIAQALIGKDAKDQAGIDKIMIDLDGTENKSKFGANAILAVSLANAKAAAAAKGMPLYEHIAELNGTPGKYSMPVPMMNIINGGEHADNNVDIQEFMIQPVGAKTVKEAIRMGSEVFHHLAKVLKAKGMNTAVGDEGGYAPNLGSNAEALAVIAEAVKAAGYELGKDITLAMDCAASEFYKDGKYVLAGEGNKAFTSEEFTHFLEELTKQYPIVSIEDGLDESDWDGFAYQTKVLGDKIQLVGDDLFVTNTKILKEGIEKGIANSILIKFNQIGSLTETLAAIKMAKDAGYTAVISHRSGETEDATIADLAVGTAAGQIKTGSMSRSDRVAKYNQLIRIEEALGEKAPYNGRKEIKGQA</sequence>
<keyword id="KW-0963">Cytoplasm</keyword>
<keyword id="KW-0324">Glycolysis</keyword>
<keyword id="KW-0456">Lyase</keyword>
<keyword id="KW-0460">Magnesium</keyword>
<keyword id="KW-0479">Metal-binding</keyword>
<keyword id="KW-0964">Secreted</keyword>
<feature type="initiator methionine" description="Removed" evidence="1">
    <location>
        <position position="1"/>
    </location>
</feature>
<feature type="chain" id="PRO_0000267033" description="Enolase">
    <location>
        <begin position="2"/>
        <end position="432"/>
    </location>
</feature>
<feature type="active site" description="Proton donor" evidence="2">
    <location>
        <position position="209"/>
    </location>
</feature>
<feature type="active site" description="Proton acceptor" evidence="2">
    <location>
        <position position="342"/>
    </location>
</feature>
<feature type="binding site" evidence="2">
    <location>
        <position position="167"/>
    </location>
    <ligand>
        <name>(2R)-2-phosphoglycerate</name>
        <dbReference type="ChEBI" id="CHEBI:58289"/>
    </ligand>
</feature>
<feature type="binding site" evidence="2">
    <location>
        <position position="246"/>
    </location>
    <ligand>
        <name>Mg(2+)</name>
        <dbReference type="ChEBI" id="CHEBI:18420"/>
    </ligand>
</feature>
<feature type="binding site" evidence="2">
    <location>
        <position position="290"/>
    </location>
    <ligand>
        <name>Mg(2+)</name>
        <dbReference type="ChEBI" id="CHEBI:18420"/>
    </ligand>
</feature>
<feature type="binding site" evidence="2">
    <location>
        <position position="317"/>
    </location>
    <ligand>
        <name>Mg(2+)</name>
        <dbReference type="ChEBI" id="CHEBI:18420"/>
    </ligand>
</feature>
<feature type="binding site" evidence="2">
    <location>
        <position position="342"/>
    </location>
    <ligand>
        <name>(2R)-2-phosphoglycerate</name>
        <dbReference type="ChEBI" id="CHEBI:58289"/>
    </ligand>
</feature>
<feature type="binding site" evidence="2">
    <location>
        <position position="371"/>
    </location>
    <ligand>
        <name>(2R)-2-phosphoglycerate</name>
        <dbReference type="ChEBI" id="CHEBI:58289"/>
    </ligand>
</feature>
<feature type="binding site" evidence="2">
    <location>
        <position position="372"/>
    </location>
    <ligand>
        <name>(2R)-2-phosphoglycerate</name>
        <dbReference type="ChEBI" id="CHEBI:58289"/>
    </ligand>
</feature>
<feature type="binding site" evidence="2">
    <location>
        <position position="393"/>
    </location>
    <ligand>
        <name>(2R)-2-phosphoglycerate</name>
        <dbReference type="ChEBI" id="CHEBI:58289"/>
    </ligand>
</feature>
<reference key="1">
    <citation type="journal article" date="2006" name="Proc. Natl. Acad. Sci. U.S.A.">
        <title>Identification of genes subject to positive selection in uropathogenic strains of Escherichia coli: a comparative genomics approach.</title>
        <authorList>
            <person name="Chen S.L."/>
            <person name="Hung C.-S."/>
            <person name="Xu J."/>
            <person name="Reigstad C.S."/>
            <person name="Magrini V."/>
            <person name="Sabo A."/>
            <person name="Blasiar D."/>
            <person name="Bieri T."/>
            <person name="Meyer R.R."/>
            <person name="Ozersky P."/>
            <person name="Armstrong J.R."/>
            <person name="Fulton R.S."/>
            <person name="Latreille J.P."/>
            <person name="Spieth J."/>
            <person name="Hooton T.M."/>
            <person name="Mardis E.R."/>
            <person name="Hultgren S.J."/>
            <person name="Gordon J.I."/>
        </authorList>
    </citation>
    <scope>NUCLEOTIDE SEQUENCE [LARGE SCALE GENOMIC DNA]</scope>
    <source>
        <strain>UTI89 / UPEC</strain>
    </source>
</reference>
<accession>Q1R7R4</accession>
<gene>
    <name evidence="2" type="primary">eno</name>
    <name type="ordered locus">UTI89_C3148</name>
</gene>
<evidence type="ECO:0000250" key="1"/>
<evidence type="ECO:0000255" key="2">
    <source>
        <dbReference type="HAMAP-Rule" id="MF_00318"/>
    </source>
</evidence>
<name>ENO_ECOUT</name>
<protein>
    <recommendedName>
        <fullName evidence="2">Enolase</fullName>
        <ecNumber evidence="2">4.2.1.11</ecNumber>
    </recommendedName>
    <alternativeName>
        <fullName evidence="2">2-phospho-D-glycerate hydro-lyase</fullName>
    </alternativeName>
    <alternativeName>
        <fullName evidence="2">2-phosphoglycerate dehydratase</fullName>
    </alternativeName>
</protein>
<proteinExistence type="inferred from homology"/>